<feature type="chain" id="PRO_1000065188" description="Regulatory protein RecX">
    <location>
        <begin position="1"/>
        <end position="174"/>
    </location>
</feature>
<comment type="function">
    <text evidence="1">Modulates RecA activity.</text>
</comment>
<comment type="subcellular location">
    <subcellularLocation>
        <location evidence="1">Cytoplasm</location>
    </subcellularLocation>
</comment>
<comment type="similarity">
    <text evidence="1">Belongs to the RecX family.</text>
</comment>
<proteinExistence type="inferred from homology"/>
<gene>
    <name evidence="1" type="primary">recX</name>
    <name type="ordered locus">BCG_2749c</name>
</gene>
<organism>
    <name type="scientific">Mycobacterium bovis (strain BCG / Pasteur 1173P2)</name>
    <dbReference type="NCBI Taxonomy" id="410289"/>
    <lineage>
        <taxon>Bacteria</taxon>
        <taxon>Bacillati</taxon>
        <taxon>Actinomycetota</taxon>
        <taxon>Actinomycetes</taxon>
        <taxon>Mycobacteriales</taxon>
        <taxon>Mycobacteriaceae</taxon>
        <taxon>Mycobacterium</taxon>
        <taxon>Mycobacterium tuberculosis complex</taxon>
    </lineage>
</organism>
<keyword id="KW-0963">Cytoplasm</keyword>
<reference key="1">
    <citation type="journal article" date="2007" name="Proc. Natl. Acad. Sci. U.S.A.">
        <title>Genome plasticity of BCG and impact on vaccine efficacy.</title>
        <authorList>
            <person name="Brosch R."/>
            <person name="Gordon S.V."/>
            <person name="Garnier T."/>
            <person name="Eiglmeier K."/>
            <person name="Frigui W."/>
            <person name="Valenti P."/>
            <person name="Dos Santos S."/>
            <person name="Duthoy S."/>
            <person name="Lacroix C."/>
            <person name="Garcia-Pelayo C."/>
            <person name="Inwald J.K."/>
            <person name="Golby P."/>
            <person name="Garcia J.N."/>
            <person name="Hewinson R.G."/>
            <person name="Behr M.A."/>
            <person name="Quail M.A."/>
            <person name="Churcher C."/>
            <person name="Barrell B.G."/>
            <person name="Parkhill J."/>
            <person name="Cole S.T."/>
        </authorList>
    </citation>
    <scope>NUCLEOTIDE SEQUENCE [LARGE SCALE GENOMIC DNA]</scope>
    <source>
        <strain>BCG / Pasteur 1173P2</strain>
    </source>
</reference>
<protein>
    <recommendedName>
        <fullName evidence="1">Regulatory protein RecX</fullName>
    </recommendedName>
</protein>
<evidence type="ECO:0000255" key="1">
    <source>
        <dbReference type="HAMAP-Rule" id="MF_01114"/>
    </source>
</evidence>
<dbReference type="EMBL" id="AM408590">
    <property type="protein sequence ID" value="CAL72737.1"/>
    <property type="molecule type" value="Genomic_DNA"/>
</dbReference>
<dbReference type="RefSeq" id="WP_003900562.1">
    <property type="nucleotide sequence ID" value="NC_008769.1"/>
</dbReference>
<dbReference type="SMR" id="A1KM74"/>
<dbReference type="KEGG" id="mbb:BCG_2749c"/>
<dbReference type="HOGENOM" id="CLU_066607_0_2_11"/>
<dbReference type="Proteomes" id="UP000001472">
    <property type="component" value="Chromosome"/>
</dbReference>
<dbReference type="GO" id="GO:0005737">
    <property type="term" value="C:cytoplasm"/>
    <property type="evidence" value="ECO:0007669"/>
    <property type="project" value="UniProtKB-SubCell"/>
</dbReference>
<dbReference type="GO" id="GO:0006282">
    <property type="term" value="P:regulation of DNA repair"/>
    <property type="evidence" value="ECO:0007669"/>
    <property type="project" value="UniProtKB-UniRule"/>
</dbReference>
<dbReference type="FunFam" id="1.10.10.10:FF:000656">
    <property type="entry name" value="Regulatory protein RecX"/>
    <property type="match status" value="1"/>
</dbReference>
<dbReference type="Gene3D" id="1.10.10.10">
    <property type="entry name" value="Winged helix-like DNA-binding domain superfamily/Winged helix DNA-binding domain"/>
    <property type="match status" value="2"/>
</dbReference>
<dbReference type="HAMAP" id="MF_01114">
    <property type="entry name" value="RecX"/>
    <property type="match status" value="1"/>
</dbReference>
<dbReference type="InterPro" id="IPR053926">
    <property type="entry name" value="RecX_HTH_1st"/>
</dbReference>
<dbReference type="InterPro" id="IPR053924">
    <property type="entry name" value="RecX_HTH_2nd"/>
</dbReference>
<dbReference type="InterPro" id="IPR003783">
    <property type="entry name" value="Regulatory_RecX"/>
</dbReference>
<dbReference type="InterPro" id="IPR036388">
    <property type="entry name" value="WH-like_DNA-bd_sf"/>
</dbReference>
<dbReference type="NCBIfam" id="NF001056">
    <property type="entry name" value="PRK00117.3-1"/>
    <property type="match status" value="1"/>
</dbReference>
<dbReference type="PANTHER" id="PTHR33602">
    <property type="entry name" value="REGULATORY PROTEIN RECX FAMILY PROTEIN"/>
    <property type="match status" value="1"/>
</dbReference>
<dbReference type="PANTHER" id="PTHR33602:SF1">
    <property type="entry name" value="REGULATORY PROTEIN RECX FAMILY PROTEIN"/>
    <property type="match status" value="1"/>
</dbReference>
<dbReference type="Pfam" id="PF21982">
    <property type="entry name" value="RecX_HTH1"/>
    <property type="match status" value="1"/>
</dbReference>
<dbReference type="Pfam" id="PF02631">
    <property type="entry name" value="RecX_HTH2"/>
    <property type="match status" value="1"/>
</dbReference>
<accession>A1KM74</accession>
<sequence>MTVSCPPPSTSEREEQARALCLRLLTARSRTRAELAGQLAKRGYPEDIGNRVLDRLAAVGLVDDTDFAEQWVQSRRANAAKSKRALAAELHAKGVDDDVITTVLGGIDAGAERGRAEKLVRARLRREVLIDDGTDEARVSRRLVAMLARRGYGQTLACEVVIAELAAERERRRV</sequence>
<name>RECX_MYCBP</name>